<gene>
    <name evidence="1" type="primary">ecfA2</name>
    <name type="synonym">cbiO2</name>
    <name type="ordered locus">MGAS10270_Spy1964</name>
</gene>
<dbReference type="EC" id="7.-.-.-" evidence="1"/>
<dbReference type="EMBL" id="CP000260">
    <property type="protein sequence ID" value="ABF35029.1"/>
    <property type="molecule type" value="Genomic_DNA"/>
</dbReference>
<dbReference type="SMR" id="Q1JEC9"/>
<dbReference type="KEGG" id="sph:MGAS10270_Spy1964"/>
<dbReference type="HOGENOM" id="CLU_000604_1_22_9"/>
<dbReference type="Proteomes" id="UP000002436">
    <property type="component" value="Chromosome"/>
</dbReference>
<dbReference type="GO" id="GO:0043190">
    <property type="term" value="C:ATP-binding cassette (ABC) transporter complex"/>
    <property type="evidence" value="ECO:0007669"/>
    <property type="project" value="TreeGrafter"/>
</dbReference>
<dbReference type="GO" id="GO:0005524">
    <property type="term" value="F:ATP binding"/>
    <property type="evidence" value="ECO:0007669"/>
    <property type="project" value="UniProtKB-KW"/>
</dbReference>
<dbReference type="GO" id="GO:0016887">
    <property type="term" value="F:ATP hydrolysis activity"/>
    <property type="evidence" value="ECO:0007669"/>
    <property type="project" value="InterPro"/>
</dbReference>
<dbReference type="GO" id="GO:0042626">
    <property type="term" value="F:ATPase-coupled transmembrane transporter activity"/>
    <property type="evidence" value="ECO:0007669"/>
    <property type="project" value="TreeGrafter"/>
</dbReference>
<dbReference type="CDD" id="cd03225">
    <property type="entry name" value="ABC_cobalt_CbiO_domain1"/>
    <property type="match status" value="1"/>
</dbReference>
<dbReference type="FunFam" id="3.40.50.300:FF:000224">
    <property type="entry name" value="Energy-coupling factor transporter ATP-binding protein EcfA"/>
    <property type="match status" value="1"/>
</dbReference>
<dbReference type="Gene3D" id="3.40.50.300">
    <property type="entry name" value="P-loop containing nucleotide triphosphate hydrolases"/>
    <property type="match status" value="1"/>
</dbReference>
<dbReference type="InterPro" id="IPR003593">
    <property type="entry name" value="AAA+_ATPase"/>
</dbReference>
<dbReference type="InterPro" id="IPR003439">
    <property type="entry name" value="ABC_transporter-like_ATP-bd"/>
</dbReference>
<dbReference type="InterPro" id="IPR017871">
    <property type="entry name" value="ABC_transporter-like_CS"/>
</dbReference>
<dbReference type="InterPro" id="IPR015856">
    <property type="entry name" value="ABC_transpr_CbiO/EcfA_su"/>
</dbReference>
<dbReference type="InterPro" id="IPR050095">
    <property type="entry name" value="ECF_ABC_transporter_ATP-bd"/>
</dbReference>
<dbReference type="InterPro" id="IPR030946">
    <property type="entry name" value="EcfA2"/>
</dbReference>
<dbReference type="InterPro" id="IPR027417">
    <property type="entry name" value="P-loop_NTPase"/>
</dbReference>
<dbReference type="NCBIfam" id="TIGR04521">
    <property type="entry name" value="ECF_ATPase_2"/>
    <property type="match status" value="1"/>
</dbReference>
<dbReference type="PANTHER" id="PTHR43553:SF27">
    <property type="entry name" value="ENERGY-COUPLING FACTOR TRANSPORTER ATP-BINDING PROTEIN ECFA2"/>
    <property type="match status" value="1"/>
</dbReference>
<dbReference type="PANTHER" id="PTHR43553">
    <property type="entry name" value="HEAVY METAL TRANSPORTER"/>
    <property type="match status" value="1"/>
</dbReference>
<dbReference type="Pfam" id="PF00005">
    <property type="entry name" value="ABC_tran"/>
    <property type="match status" value="1"/>
</dbReference>
<dbReference type="SMART" id="SM00382">
    <property type="entry name" value="AAA"/>
    <property type="match status" value="1"/>
</dbReference>
<dbReference type="SUPFAM" id="SSF52540">
    <property type="entry name" value="P-loop containing nucleoside triphosphate hydrolases"/>
    <property type="match status" value="1"/>
</dbReference>
<dbReference type="PROSITE" id="PS00211">
    <property type="entry name" value="ABC_TRANSPORTER_1"/>
    <property type="match status" value="1"/>
</dbReference>
<dbReference type="PROSITE" id="PS50893">
    <property type="entry name" value="ABC_TRANSPORTER_2"/>
    <property type="match status" value="1"/>
</dbReference>
<dbReference type="PROSITE" id="PS51246">
    <property type="entry name" value="CBIO"/>
    <property type="match status" value="1"/>
</dbReference>
<keyword id="KW-0067">ATP-binding</keyword>
<keyword id="KW-1003">Cell membrane</keyword>
<keyword id="KW-0472">Membrane</keyword>
<keyword id="KW-0547">Nucleotide-binding</keyword>
<keyword id="KW-1278">Translocase</keyword>
<keyword id="KW-0813">Transport</keyword>
<protein>
    <recommendedName>
        <fullName evidence="1">Energy-coupling factor transporter ATP-binding protein EcfA2</fullName>
        <shortName evidence="1">ECF transporter A component EcfA2</shortName>
        <ecNumber evidence="1">7.-.-.-</ecNumber>
    </recommendedName>
</protein>
<name>ECFA2_STRPD</name>
<feature type="chain" id="PRO_0000288000" description="Energy-coupling factor transporter ATP-binding protein EcfA2">
    <location>
        <begin position="1"/>
        <end position="280"/>
    </location>
</feature>
<feature type="domain" description="ABC transporter" evidence="1">
    <location>
        <begin position="3"/>
        <end position="245"/>
    </location>
</feature>
<feature type="binding site" evidence="1">
    <location>
        <begin position="40"/>
        <end position="47"/>
    </location>
    <ligand>
        <name>ATP</name>
        <dbReference type="ChEBI" id="CHEBI:30616"/>
    </ligand>
</feature>
<sequence>MSINLQNVSYTYQAGTPFEGRALFNINLDILDGSYTAFIGHTGSGKSTIMQLLNGLHVPTTGIVSVDKQDITNHSKNKEIKSIRKHVGLVFQFPESQLFEETVLKDVAFGPQNFGVSPEEAEALAREKLALVGISENLFEKNPFELSGGQMRRVAIAGILAMQPKVLVLDEPTAGLDPKGRKELMTIFKKLHQSGMTIVLVTHLMDDVANYADFVYVLDKGKIILSGKPKTIFQQVSLLEKKQLGVPKVTKLAQRLVDRGIPISSLPITLEELREVLKHG</sequence>
<organism>
    <name type="scientific">Streptococcus pyogenes serotype M2 (strain MGAS10270)</name>
    <dbReference type="NCBI Taxonomy" id="370552"/>
    <lineage>
        <taxon>Bacteria</taxon>
        <taxon>Bacillati</taxon>
        <taxon>Bacillota</taxon>
        <taxon>Bacilli</taxon>
        <taxon>Lactobacillales</taxon>
        <taxon>Streptococcaceae</taxon>
        <taxon>Streptococcus</taxon>
    </lineage>
</organism>
<evidence type="ECO:0000255" key="1">
    <source>
        <dbReference type="HAMAP-Rule" id="MF_01710"/>
    </source>
</evidence>
<proteinExistence type="inferred from homology"/>
<comment type="function">
    <text evidence="1">ATP-binding (A) component of a common energy-coupling factor (ECF) ABC-transporter complex. Unlike classic ABC transporters this ECF transporter provides the energy necessary to transport a number of different substrates.</text>
</comment>
<comment type="subunit">
    <text evidence="1">Forms a stable energy-coupling factor (ECF) transporter complex composed of 2 membrane-embedded substrate-binding proteins (S component), 2 ATP-binding proteins (A component) and 2 transmembrane proteins (T component).</text>
</comment>
<comment type="subcellular location">
    <subcellularLocation>
        <location evidence="1">Cell membrane</location>
        <topology evidence="1">Peripheral membrane protein</topology>
    </subcellularLocation>
</comment>
<comment type="similarity">
    <text evidence="1">Belongs to the ABC transporter superfamily. Energy-coupling factor EcfA family.</text>
</comment>
<accession>Q1JEC9</accession>
<reference key="1">
    <citation type="journal article" date="2006" name="Proc. Natl. Acad. Sci. U.S.A.">
        <title>Molecular genetic anatomy of inter- and intraserotype variation in the human bacterial pathogen group A Streptococcus.</title>
        <authorList>
            <person name="Beres S.B."/>
            <person name="Richter E.W."/>
            <person name="Nagiec M.J."/>
            <person name="Sumby P."/>
            <person name="Porcella S.F."/>
            <person name="DeLeo F.R."/>
            <person name="Musser J.M."/>
        </authorList>
    </citation>
    <scope>NUCLEOTIDE SEQUENCE [LARGE SCALE GENOMIC DNA]</scope>
    <source>
        <strain>MGAS10270</strain>
    </source>
</reference>